<keyword id="KW-0067">ATP-binding</keyword>
<keyword id="KW-0963">Cytoplasm</keyword>
<keyword id="KW-0418">Kinase</keyword>
<keyword id="KW-0547">Nucleotide-binding</keyword>
<keyword id="KW-0539">Nucleus</keyword>
<keyword id="KW-0665">Pyrimidine biosynthesis</keyword>
<keyword id="KW-0808">Transferase</keyword>
<name>KCY_PRUAR</name>
<dbReference type="EC" id="2.7.4.14" evidence="1"/>
<dbReference type="EMBL" id="U82330">
    <property type="protein sequence ID" value="AAB68604.1"/>
    <property type="molecule type" value="mRNA"/>
</dbReference>
<dbReference type="SMR" id="O24464"/>
<dbReference type="GO" id="GO:0005737">
    <property type="term" value="C:cytoplasm"/>
    <property type="evidence" value="ECO:0007669"/>
    <property type="project" value="UniProtKB-SubCell"/>
</dbReference>
<dbReference type="GO" id="GO:0005634">
    <property type="term" value="C:nucleus"/>
    <property type="evidence" value="ECO:0007669"/>
    <property type="project" value="UniProtKB-SubCell"/>
</dbReference>
<dbReference type="GO" id="GO:0005524">
    <property type="term" value="F:ATP binding"/>
    <property type="evidence" value="ECO:0007669"/>
    <property type="project" value="UniProtKB-KW"/>
</dbReference>
<dbReference type="GO" id="GO:0036430">
    <property type="term" value="F:CMP kinase activity"/>
    <property type="evidence" value="ECO:0007669"/>
    <property type="project" value="RHEA"/>
</dbReference>
<dbReference type="GO" id="GO:0036431">
    <property type="term" value="F:dCMP kinase activity"/>
    <property type="evidence" value="ECO:0007669"/>
    <property type="project" value="RHEA"/>
</dbReference>
<dbReference type="GO" id="GO:0033862">
    <property type="term" value="F:UMP kinase activity"/>
    <property type="evidence" value="ECO:0007669"/>
    <property type="project" value="RHEA"/>
</dbReference>
<dbReference type="GO" id="GO:0006207">
    <property type="term" value="P:'de novo' pyrimidine nucleobase biosynthetic process"/>
    <property type="evidence" value="ECO:0007669"/>
    <property type="project" value="InterPro"/>
</dbReference>
<dbReference type="GO" id="GO:0006221">
    <property type="term" value="P:pyrimidine nucleotide biosynthetic process"/>
    <property type="evidence" value="ECO:0007669"/>
    <property type="project" value="UniProtKB-UniRule"/>
</dbReference>
<dbReference type="CDD" id="cd01428">
    <property type="entry name" value="ADK"/>
    <property type="match status" value="1"/>
</dbReference>
<dbReference type="FunFam" id="3.40.50.300:FF:000315">
    <property type="entry name" value="Adenylate kinase 1"/>
    <property type="match status" value="1"/>
</dbReference>
<dbReference type="Gene3D" id="3.40.50.300">
    <property type="entry name" value="P-loop containing nucleotide triphosphate hydrolases"/>
    <property type="match status" value="1"/>
</dbReference>
<dbReference type="HAMAP" id="MF_00235">
    <property type="entry name" value="Adenylate_kinase_Adk"/>
    <property type="match status" value="1"/>
</dbReference>
<dbReference type="HAMAP" id="MF_03172">
    <property type="entry name" value="Adenylate_kinase_UMP_CMP_kin"/>
    <property type="match status" value="1"/>
</dbReference>
<dbReference type="InterPro" id="IPR000850">
    <property type="entry name" value="Adenylat/UMP-CMP_kin"/>
</dbReference>
<dbReference type="InterPro" id="IPR033690">
    <property type="entry name" value="Adenylat_kinase_CS"/>
</dbReference>
<dbReference type="InterPro" id="IPR027417">
    <property type="entry name" value="P-loop_NTPase"/>
</dbReference>
<dbReference type="InterPro" id="IPR006266">
    <property type="entry name" value="UMP_CMP_kinase"/>
</dbReference>
<dbReference type="NCBIfam" id="TIGR01359">
    <property type="entry name" value="UMP_CMP_kin_fam"/>
    <property type="match status" value="1"/>
</dbReference>
<dbReference type="PANTHER" id="PTHR23359">
    <property type="entry name" value="NUCLEOTIDE KINASE"/>
    <property type="match status" value="1"/>
</dbReference>
<dbReference type="Pfam" id="PF00406">
    <property type="entry name" value="ADK"/>
    <property type="match status" value="1"/>
</dbReference>
<dbReference type="PRINTS" id="PR00094">
    <property type="entry name" value="ADENYLTKNASE"/>
</dbReference>
<dbReference type="SUPFAM" id="SSF52540">
    <property type="entry name" value="P-loop containing nucleoside triphosphate hydrolases"/>
    <property type="match status" value="1"/>
</dbReference>
<dbReference type="PROSITE" id="PS00113">
    <property type="entry name" value="ADENYLATE_KINASE"/>
    <property type="match status" value="1"/>
</dbReference>
<comment type="function">
    <text evidence="1">Catalyzes the phosphorylation of pyrimidine nucleoside monophosphates at the expense of ATP. Plays an important role in de novo pyrimidine nucleotide biosynthesis. Has preference for UMP and CMP as phosphate acceptors.</text>
</comment>
<comment type="catalytic activity">
    <reaction evidence="1">
        <text>CMP + ATP = CDP + ADP</text>
        <dbReference type="Rhea" id="RHEA:11600"/>
        <dbReference type="ChEBI" id="CHEBI:30616"/>
        <dbReference type="ChEBI" id="CHEBI:58069"/>
        <dbReference type="ChEBI" id="CHEBI:60377"/>
        <dbReference type="ChEBI" id="CHEBI:456216"/>
        <dbReference type="EC" id="2.7.4.14"/>
    </reaction>
</comment>
<comment type="catalytic activity">
    <reaction evidence="1">
        <text>dCMP + ATP = dCDP + ADP</text>
        <dbReference type="Rhea" id="RHEA:25094"/>
        <dbReference type="ChEBI" id="CHEBI:30616"/>
        <dbReference type="ChEBI" id="CHEBI:57566"/>
        <dbReference type="ChEBI" id="CHEBI:58593"/>
        <dbReference type="ChEBI" id="CHEBI:456216"/>
        <dbReference type="EC" id="2.7.4.14"/>
    </reaction>
</comment>
<comment type="catalytic activity">
    <reaction evidence="1">
        <text>UMP + ATP = UDP + ADP</text>
        <dbReference type="Rhea" id="RHEA:24400"/>
        <dbReference type="ChEBI" id="CHEBI:30616"/>
        <dbReference type="ChEBI" id="CHEBI:57865"/>
        <dbReference type="ChEBI" id="CHEBI:58223"/>
        <dbReference type="ChEBI" id="CHEBI:456216"/>
        <dbReference type="EC" id="2.7.4.14"/>
    </reaction>
</comment>
<comment type="cofactor">
    <cofactor evidence="1">
        <name>Mg(2+)</name>
        <dbReference type="ChEBI" id="CHEBI:18420"/>
    </cofactor>
    <text evidence="1">Binds 1 Mg(2+) ion per monomer.</text>
</comment>
<comment type="subunit">
    <text evidence="1">Monomer.</text>
</comment>
<comment type="subcellular location">
    <subcellularLocation>
        <location evidence="1">Cytoplasm</location>
    </subcellularLocation>
    <subcellularLocation>
        <location evidence="1">Nucleus</location>
    </subcellularLocation>
</comment>
<comment type="domain">
    <text evidence="1">Consists of three domains, a large central CORE domain and two small peripheral domains, NMPbind and LID, which undergo movements during catalysis. The LID domain closes over the site of phosphoryl transfer upon ATP binding. Assembling and dissambling the active center during each catalytic cycle provides an effective means to prevent ATP hydrolysis.</text>
</comment>
<comment type="similarity">
    <text evidence="1">Belongs to the adenylate kinase family. UMP-CMP kinase subfamily.</text>
</comment>
<feature type="chain" id="PRO_0000158944" description="UMP-CMP kinase">
    <location>
        <begin position="1"/>
        <end position="231"/>
    </location>
</feature>
<feature type="region of interest" description="NMP" evidence="1">
    <location>
        <begin position="77"/>
        <end position="106"/>
    </location>
</feature>
<feature type="region of interest" description="LID" evidence="1">
    <location>
        <begin position="169"/>
        <end position="177"/>
    </location>
</feature>
<feature type="binding site" evidence="1">
    <location>
        <begin position="57"/>
        <end position="62"/>
    </location>
    <ligand>
        <name>ATP</name>
        <dbReference type="ChEBI" id="CHEBI:30616"/>
    </ligand>
</feature>
<feature type="binding site" evidence="1">
    <location>
        <position position="83"/>
    </location>
    <ligand>
        <name>a ribonucleoside 5'-phosphate</name>
        <dbReference type="ChEBI" id="CHEBI:58043"/>
    </ligand>
</feature>
<feature type="binding site" evidence="1">
    <location>
        <begin position="104"/>
        <end position="106"/>
    </location>
    <ligand>
        <name>a ribonucleoside 5'-phosphate</name>
        <dbReference type="ChEBI" id="CHEBI:58043"/>
    </ligand>
</feature>
<feature type="binding site" evidence="1">
    <location>
        <begin position="131"/>
        <end position="134"/>
    </location>
    <ligand>
        <name>a ribonucleoside 5'-phosphate</name>
        <dbReference type="ChEBI" id="CHEBI:58043"/>
    </ligand>
</feature>
<feature type="binding site" evidence="1">
    <location>
        <position position="138"/>
    </location>
    <ligand>
        <name>CMP</name>
        <dbReference type="ChEBI" id="CHEBI:60377"/>
    </ligand>
</feature>
<feature type="binding site" evidence="1">
    <location>
        <position position="170"/>
    </location>
    <ligand>
        <name>ATP</name>
        <dbReference type="ChEBI" id="CHEBI:30616"/>
    </ligand>
</feature>
<feature type="binding site" evidence="1">
    <location>
        <position position="174"/>
    </location>
    <ligand>
        <name>a ribonucleoside 5'-phosphate</name>
        <dbReference type="ChEBI" id="CHEBI:58043"/>
    </ligand>
</feature>
<feature type="binding site" evidence="1">
    <location>
        <position position="185"/>
    </location>
    <ligand>
        <name>a ribonucleoside 5'-phosphate</name>
        <dbReference type="ChEBI" id="CHEBI:58043"/>
    </ligand>
</feature>
<feature type="binding site" evidence="1">
    <location>
        <position position="213"/>
    </location>
    <ligand>
        <name>ATP</name>
        <dbReference type="ChEBI" id="CHEBI:30616"/>
    </ligand>
</feature>
<accession>O24464</accession>
<organism>
    <name type="scientific">Prunus armeniaca</name>
    <name type="common">Apricot</name>
    <name type="synonym">Armeniaca vulgaris</name>
    <dbReference type="NCBI Taxonomy" id="36596"/>
    <lineage>
        <taxon>Eukaryota</taxon>
        <taxon>Viridiplantae</taxon>
        <taxon>Streptophyta</taxon>
        <taxon>Embryophyta</taxon>
        <taxon>Tracheophyta</taxon>
        <taxon>Spermatophyta</taxon>
        <taxon>Magnoliopsida</taxon>
        <taxon>eudicotyledons</taxon>
        <taxon>Gunneridae</taxon>
        <taxon>Pentapetalae</taxon>
        <taxon>rosids</taxon>
        <taxon>fabids</taxon>
        <taxon>Rosales</taxon>
        <taxon>Rosaceae</taxon>
        <taxon>Amygdaloideae</taxon>
        <taxon>Amygdaleae</taxon>
        <taxon>Prunus</taxon>
    </lineage>
</organism>
<proteinExistence type="evidence at transcript level"/>
<reference key="1">
    <citation type="submission" date="1996-12" db="EMBL/GenBank/DDBJ databases">
        <title>Molecular cloning and nucleotide sequence of an adenylate kinase from apricot.</title>
        <authorList>
            <person name="Mbeguie-A-Mbeguie D."/>
            <person name="Gomez R.-M."/>
            <person name="Fils-Lycaon B.R."/>
        </authorList>
    </citation>
    <scope>NUCLEOTIDE SEQUENCE [MRNA]</scope>
    <source>
        <strain>cv. Bergeron</strain>
        <tissue>Fruit</tissue>
    </source>
</reference>
<evidence type="ECO:0000255" key="1">
    <source>
        <dbReference type="HAMAP-Rule" id="MF_03172"/>
    </source>
</evidence>
<protein>
    <recommendedName>
        <fullName evidence="1">UMP-CMP kinase</fullName>
        <ecNumber evidence="1">2.7.4.14</ecNumber>
    </recommendedName>
    <alternativeName>
        <fullName evidence="1">Deoxycytidylate kinase</fullName>
        <shortName evidence="1">CK</shortName>
        <shortName evidence="1">dCMP kinase</shortName>
    </alternativeName>
    <alternativeName>
        <fullName evidence="1">Uridine monophosphate/cytidine monophosphate kinase</fullName>
        <shortName evidence="1">UMP/CMP kinase</shortName>
        <shortName evidence="1">UMP/CMPK</shortName>
    </alternativeName>
</protein>
<sequence>MWRRVTSVSHLFSHSKSTKFNQGASTFKIWETFTSESEIPTPSKGSPFVTFVLGGPGSGKGTQCAKIVEAFGFTHVSAGDLLRREIASGSAYGSVILSTIREGKIVPSQVTVELIQKEMESSDNYKFLIDGFPRSEENRKAFEQTIGAEPDVVLFFDCPEQEMVKRVLNRNQGRVDDNIDTIKKRLEIFDELNWPVINYYSQRGKLHKINAVGTVDEIFEKVRPIFAPLSK</sequence>